<accession>Q135M8</accession>
<protein>
    <recommendedName>
        <fullName evidence="1">Small ribosomal subunit protein bS6</fullName>
    </recommendedName>
    <alternativeName>
        <fullName evidence="3">30S ribosomal protein S6</fullName>
    </alternativeName>
</protein>
<feature type="chain" id="PRO_1000005332" description="Small ribosomal subunit protein bS6">
    <location>
        <begin position="1"/>
        <end position="160"/>
    </location>
</feature>
<feature type="region of interest" description="Disordered" evidence="2">
    <location>
        <begin position="94"/>
        <end position="160"/>
    </location>
</feature>
<feature type="compositionally biased region" description="Basic and acidic residues" evidence="2">
    <location>
        <begin position="94"/>
        <end position="119"/>
    </location>
</feature>
<feature type="compositionally biased region" description="Basic and acidic residues" evidence="2">
    <location>
        <begin position="125"/>
        <end position="152"/>
    </location>
</feature>
<reference key="1">
    <citation type="submission" date="2006-03" db="EMBL/GenBank/DDBJ databases">
        <title>Complete sequence of Rhodopseudomonas palustris BisB5.</title>
        <authorList>
            <consortium name="US DOE Joint Genome Institute"/>
            <person name="Copeland A."/>
            <person name="Lucas S."/>
            <person name="Lapidus A."/>
            <person name="Barry K."/>
            <person name="Detter J.C."/>
            <person name="Glavina del Rio T."/>
            <person name="Hammon N."/>
            <person name="Israni S."/>
            <person name="Dalin E."/>
            <person name="Tice H."/>
            <person name="Pitluck S."/>
            <person name="Chain P."/>
            <person name="Malfatti S."/>
            <person name="Shin M."/>
            <person name="Vergez L."/>
            <person name="Schmutz J."/>
            <person name="Larimer F."/>
            <person name="Land M."/>
            <person name="Hauser L."/>
            <person name="Pelletier D.A."/>
            <person name="Kyrpides N."/>
            <person name="Lykidis A."/>
            <person name="Oda Y."/>
            <person name="Harwood C.S."/>
            <person name="Richardson P."/>
        </authorList>
    </citation>
    <scope>NUCLEOTIDE SEQUENCE [LARGE SCALE GENOMIC DNA]</scope>
    <source>
        <strain>BisB5</strain>
    </source>
</reference>
<organism>
    <name type="scientific">Rhodopseudomonas palustris (strain BisB5)</name>
    <dbReference type="NCBI Taxonomy" id="316057"/>
    <lineage>
        <taxon>Bacteria</taxon>
        <taxon>Pseudomonadati</taxon>
        <taxon>Pseudomonadota</taxon>
        <taxon>Alphaproteobacteria</taxon>
        <taxon>Hyphomicrobiales</taxon>
        <taxon>Nitrobacteraceae</taxon>
        <taxon>Rhodopseudomonas</taxon>
    </lineage>
</organism>
<evidence type="ECO:0000255" key="1">
    <source>
        <dbReference type="HAMAP-Rule" id="MF_00360"/>
    </source>
</evidence>
<evidence type="ECO:0000256" key="2">
    <source>
        <dbReference type="SAM" id="MobiDB-lite"/>
    </source>
</evidence>
<evidence type="ECO:0000305" key="3"/>
<dbReference type="EMBL" id="CP000283">
    <property type="protein sequence ID" value="ABE40211.1"/>
    <property type="molecule type" value="Genomic_DNA"/>
</dbReference>
<dbReference type="SMR" id="Q135M8"/>
<dbReference type="STRING" id="316057.RPD_2985"/>
<dbReference type="KEGG" id="rpd:RPD_2985"/>
<dbReference type="eggNOG" id="COG0360">
    <property type="taxonomic scope" value="Bacteria"/>
</dbReference>
<dbReference type="HOGENOM" id="CLU_113441_2_0_5"/>
<dbReference type="BioCyc" id="RPAL316057:RPD_RS14995-MONOMER"/>
<dbReference type="Proteomes" id="UP000001818">
    <property type="component" value="Chromosome"/>
</dbReference>
<dbReference type="GO" id="GO:0022627">
    <property type="term" value="C:cytosolic small ribosomal subunit"/>
    <property type="evidence" value="ECO:0007669"/>
    <property type="project" value="TreeGrafter"/>
</dbReference>
<dbReference type="GO" id="GO:0070181">
    <property type="term" value="F:small ribosomal subunit rRNA binding"/>
    <property type="evidence" value="ECO:0007669"/>
    <property type="project" value="TreeGrafter"/>
</dbReference>
<dbReference type="GO" id="GO:0003735">
    <property type="term" value="F:structural constituent of ribosome"/>
    <property type="evidence" value="ECO:0007669"/>
    <property type="project" value="InterPro"/>
</dbReference>
<dbReference type="GO" id="GO:0006412">
    <property type="term" value="P:translation"/>
    <property type="evidence" value="ECO:0007669"/>
    <property type="project" value="UniProtKB-UniRule"/>
</dbReference>
<dbReference type="CDD" id="cd00473">
    <property type="entry name" value="bS6"/>
    <property type="match status" value="1"/>
</dbReference>
<dbReference type="Gene3D" id="3.30.70.60">
    <property type="match status" value="1"/>
</dbReference>
<dbReference type="HAMAP" id="MF_00360">
    <property type="entry name" value="Ribosomal_bS6"/>
    <property type="match status" value="1"/>
</dbReference>
<dbReference type="InterPro" id="IPR000529">
    <property type="entry name" value="Ribosomal_bS6"/>
</dbReference>
<dbReference type="InterPro" id="IPR035980">
    <property type="entry name" value="Ribosomal_bS6_sf"/>
</dbReference>
<dbReference type="InterPro" id="IPR020814">
    <property type="entry name" value="Ribosomal_S6_plastid/chlpt"/>
</dbReference>
<dbReference type="InterPro" id="IPR014717">
    <property type="entry name" value="Transl_elong_EF1B/ribsomal_bS6"/>
</dbReference>
<dbReference type="NCBIfam" id="TIGR00166">
    <property type="entry name" value="S6"/>
    <property type="match status" value="1"/>
</dbReference>
<dbReference type="PANTHER" id="PTHR21011">
    <property type="entry name" value="MITOCHONDRIAL 28S RIBOSOMAL PROTEIN S6"/>
    <property type="match status" value="1"/>
</dbReference>
<dbReference type="PANTHER" id="PTHR21011:SF1">
    <property type="entry name" value="SMALL RIBOSOMAL SUBUNIT PROTEIN BS6M"/>
    <property type="match status" value="1"/>
</dbReference>
<dbReference type="Pfam" id="PF01250">
    <property type="entry name" value="Ribosomal_S6"/>
    <property type="match status" value="1"/>
</dbReference>
<dbReference type="SUPFAM" id="SSF54995">
    <property type="entry name" value="Ribosomal protein S6"/>
    <property type="match status" value="1"/>
</dbReference>
<gene>
    <name evidence="1" type="primary">rpsF</name>
    <name type="ordered locus">RPD_2985</name>
</gene>
<proteinExistence type="inferred from homology"/>
<sequence>MPLYEHVFLARQDASTQQVEELTTQITGVIEGLGGKVTKTEAWGLRSLTYRMNKNRKAHFVMLNIDGPSAVVAEVERQERINEDIIRYLTVRVEEHEEGPSAMMRKADRDRERDDRGGREGGGFRGDREGRGDREGGGFRGDRGPRRPREDADTAAASEE</sequence>
<comment type="function">
    <text evidence="1">Binds together with bS18 to 16S ribosomal RNA.</text>
</comment>
<comment type="similarity">
    <text evidence="1">Belongs to the bacterial ribosomal protein bS6 family.</text>
</comment>
<keyword id="KW-0687">Ribonucleoprotein</keyword>
<keyword id="KW-0689">Ribosomal protein</keyword>
<keyword id="KW-0694">RNA-binding</keyword>
<keyword id="KW-0699">rRNA-binding</keyword>
<name>RS6_RHOPS</name>